<sequence>MATTWPPRTVIRKSSGLRTLESALYRSGLGPVAGVDEVGRGACAGPLVVAACVLGPGKLESLAALDDSKKLTESVRERLFPVIRRYALAYHVVFIPPAEVDRRGVHVANIEGMRRAVAGLSLRPGYVLSDGFRVPGLAVPSLPVIGGDAVAACIAAASVLAKVSRDRLMVAMDAEHPGYGFADHKGYSTPAHSAALARLGPCPQHRHSFINVRRVANGSGGRVVADCKPDLPLQRDEGR</sequence>
<evidence type="ECO:0000255" key="1">
    <source>
        <dbReference type="HAMAP-Rule" id="MF_00052"/>
    </source>
</evidence>
<evidence type="ECO:0000255" key="2">
    <source>
        <dbReference type="PROSITE-ProRule" id="PRU01319"/>
    </source>
</evidence>
<reference key="1">
    <citation type="journal article" date="2005" name="Proc. Natl. Acad. Sci. U.S.A.">
        <title>The complete genome sequence of Mycobacterium avium subspecies paratuberculosis.</title>
        <authorList>
            <person name="Li L."/>
            <person name="Bannantine J.P."/>
            <person name="Zhang Q."/>
            <person name="Amonsin A."/>
            <person name="May B.J."/>
            <person name="Alt D."/>
            <person name="Banerji N."/>
            <person name="Kanjilal S."/>
            <person name="Kapur V."/>
        </authorList>
    </citation>
    <scope>NUCLEOTIDE SEQUENCE [LARGE SCALE GENOMIC DNA]</scope>
    <source>
        <strain>ATCC BAA-968 / K-10</strain>
    </source>
</reference>
<name>RNH2_MYCPA</name>
<organism>
    <name type="scientific">Mycolicibacterium paratuberculosis (strain ATCC BAA-968 / K-10)</name>
    <name type="common">Mycobacterium paratuberculosis</name>
    <dbReference type="NCBI Taxonomy" id="262316"/>
    <lineage>
        <taxon>Bacteria</taxon>
        <taxon>Bacillati</taxon>
        <taxon>Actinomycetota</taxon>
        <taxon>Actinomycetes</taxon>
        <taxon>Mycobacteriales</taxon>
        <taxon>Mycobacteriaceae</taxon>
        <taxon>Mycobacterium</taxon>
        <taxon>Mycobacterium avium complex (MAC)</taxon>
    </lineage>
</organism>
<gene>
    <name evidence="1" type="primary">rnhB</name>
    <name type="ordered locus">MAP_2970c</name>
</gene>
<proteinExistence type="inferred from homology"/>
<comment type="function">
    <text evidence="1">Endonuclease that specifically degrades the RNA of RNA-DNA hybrids.</text>
</comment>
<comment type="catalytic activity">
    <reaction evidence="1">
        <text>Endonucleolytic cleavage to 5'-phosphomonoester.</text>
        <dbReference type="EC" id="3.1.26.4"/>
    </reaction>
</comment>
<comment type="cofactor">
    <cofactor evidence="1">
        <name>Mn(2+)</name>
        <dbReference type="ChEBI" id="CHEBI:29035"/>
    </cofactor>
    <cofactor evidence="1">
        <name>Mg(2+)</name>
        <dbReference type="ChEBI" id="CHEBI:18420"/>
    </cofactor>
    <text evidence="1">Manganese or magnesium. Binds 1 divalent metal ion per monomer in the absence of substrate. May bind a second metal ion after substrate binding.</text>
</comment>
<comment type="subcellular location">
    <subcellularLocation>
        <location evidence="1">Cytoplasm</location>
    </subcellularLocation>
</comment>
<comment type="similarity">
    <text evidence="1">Belongs to the RNase HII family.</text>
</comment>
<accession>Q73VP3</accession>
<dbReference type="EC" id="3.1.26.4" evidence="1"/>
<dbReference type="EMBL" id="AE016958">
    <property type="protein sequence ID" value="AAS05287.1"/>
    <property type="molecule type" value="Genomic_DNA"/>
</dbReference>
<dbReference type="RefSeq" id="WP_003875076.1">
    <property type="nucleotide sequence ID" value="NC_002944.2"/>
</dbReference>
<dbReference type="SMR" id="Q73VP3"/>
<dbReference type="STRING" id="262316.MAP_2970c"/>
<dbReference type="KEGG" id="mpa:MAP_2970c"/>
<dbReference type="eggNOG" id="COG0164">
    <property type="taxonomic scope" value="Bacteria"/>
</dbReference>
<dbReference type="HOGENOM" id="CLU_036532_1_0_11"/>
<dbReference type="Proteomes" id="UP000000580">
    <property type="component" value="Chromosome"/>
</dbReference>
<dbReference type="GO" id="GO:0005737">
    <property type="term" value="C:cytoplasm"/>
    <property type="evidence" value="ECO:0007669"/>
    <property type="project" value="UniProtKB-SubCell"/>
</dbReference>
<dbReference type="GO" id="GO:0032299">
    <property type="term" value="C:ribonuclease H2 complex"/>
    <property type="evidence" value="ECO:0007669"/>
    <property type="project" value="TreeGrafter"/>
</dbReference>
<dbReference type="GO" id="GO:0030145">
    <property type="term" value="F:manganese ion binding"/>
    <property type="evidence" value="ECO:0007669"/>
    <property type="project" value="UniProtKB-UniRule"/>
</dbReference>
<dbReference type="GO" id="GO:0003723">
    <property type="term" value="F:RNA binding"/>
    <property type="evidence" value="ECO:0007669"/>
    <property type="project" value="InterPro"/>
</dbReference>
<dbReference type="GO" id="GO:0004523">
    <property type="term" value="F:RNA-DNA hybrid ribonuclease activity"/>
    <property type="evidence" value="ECO:0007669"/>
    <property type="project" value="UniProtKB-UniRule"/>
</dbReference>
<dbReference type="GO" id="GO:0043137">
    <property type="term" value="P:DNA replication, removal of RNA primer"/>
    <property type="evidence" value="ECO:0007669"/>
    <property type="project" value="TreeGrafter"/>
</dbReference>
<dbReference type="GO" id="GO:0006298">
    <property type="term" value="P:mismatch repair"/>
    <property type="evidence" value="ECO:0007669"/>
    <property type="project" value="TreeGrafter"/>
</dbReference>
<dbReference type="CDD" id="cd07182">
    <property type="entry name" value="RNase_HII_bacteria_HII_like"/>
    <property type="match status" value="1"/>
</dbReference>
<dbReference type="FunFam" id="3.30.420.10:FF:000113">
    <property type="entry name" value="Ribonuclease HII"/>
    <property type="match status" value="1"/>
</dbReference>
<dbReference type="Gene3D" id="3.30.420.10">
    <property type="entry name" value="Ribonuclease H-like superfamily/Ribonuclease H"/>
    <property type="match status" value="1"/>
</dbReference>
<dbReference type="HAMAP" id="MF_00052_B">
    <property type="entry name" value="RNase_HII_B"/>
    <property type="match status" value="1"/>
</dbReference>
<dbReference type="InterPro" id="IPR022898">
    <property type="entry name" value="RNase_HII"/>
</dbReference>
<dbReference type="InterPro" id="IPR001352">
    <property type="entry name" value="RNase_HII/HIII"/>
</dbReference>
<dbReference type="InterPro" id="IPR024567">
    <property type="entry name" value="RNase_HII/HIII_dom"/>
</dbReference>
<dbReference type="InterPro" id="IPR012337">
    <property type="entry name" value="RNaseH-like_sf"/>
</dbReference>
<dbReference type="InterPro" id="IPR036397">
    <property type="entry name" value="RNaseH_sf"/>
</dbReference>
<dbReference type="NCBIfam" id="NF000595">
    <property type="entry name" value="PRK00015.1-3"/>
    <property type="match status" value="1"/>
</dbReference>
<dbReference type="NCBIfam" id="NF000598">
    <property type="entry name" value="PRK00015.2-2"/>
    <property type="match status" value="1"/>
</dbReference>
<dbReference type="NCBIfam" id="NF000600">
    <property type="entry name" value="PRK00015.2-4"/>
    <property type="match status" value="1"/>
</dbReference>
<dbReference type="PANTHER" id="PTHR10954">
    <property type="entry name" value="RIBONUCLEASE H2 SUBUNIT A"/>
    <property type="match status" value="1"/>
</dbReference>
<dbReference type="PANTHER" id="PTHR10954:SF18">
    <property type="entry name" value="RIBONUCLEASE HII"/>
    <property type="match status" value="1"/>
</dbReference>
<dbReference type="Pfam" id="PF01351">
    <property type="entry name" value="RNase_HII"/>
    <property type="match status" value="1"/>
</dbReference>
<dbReference type="SUPFAM" id="SSF53098">
    <property type="entry name" value="Ribonuclease H-like"/>
    <property type="match status" value="1"/>
</dbReference>
<dbReference type="PROSITE" id="PS51975">
    <property type="entry name" value="RNASE_H_2"/>
    <property type="match status" value="1"/>
</dbReference>
<keyword id="KW-0963">Cytoplasm</keyword>
<keyword id="KW-0255">Endonuclease</keyword>
<keyword id="KW-0378">Hydrolase</keyword>
<keyword id="KW-0464">Manganese</keyword>
<keyword id="KW-0479">Metal-binding</keyword>
<keyword id="KW-0540">Nuclease</keyword>
<keyword id="KW-1185">Reference proteome</keyword>
<protein>
    <recommendedName>
        <fullName evidence="1">Ribonuclease HII</fullName>
        <shortName evidence="1">RNase HII</shortName>
        <ecNumber evidence="1">3.1.26.4</ecNumber>
    </recommendedName>
</protein>
<feature type="chain" id="PRO_0000235737" description="Ribonuclease HII">
    <location>
        <begin position="1"/>
        <end position="239"/>
    </location>
</feature>
<feature type="domain" description="RNase H type-2" evidence="2">
    <location>
        <begin position="30"/>
        <end position="221"/>
    </location>
</feature>
<feature type="binding site" evidence="1">
    <location>
        <position position="36"/>
    </location>
    <ligand>
        <name>a divalent metal cation</name>
        <dbReference type="ChEBI" id="CHEBI:60240"/>
    </ligand>
</feature>
<feature type="binding site" evidence="1">
    <location>
        <position position="37"/>
    </location>
    <ligand>
        <name>a divalent metal cation</name>
        <dbReference type="ChEBI" id="CHEBI:60240"/>
    </ligand>
</feature>
<feature type="binding site" evidence="1">
    <location>
        <position position="130"/>
    </location>
    <ligand>
        <name>a divalent metal cation</name>
        <dbReference type="ChEBI" id="CHEBI:60240"/>
    </ligand>
</feature>